<evidence type="ECO:0000255" key="1">
    <source>
        <dbReference type="HAMAP-Rule" id="MF_00389"/>
    </source>
</evidence>
<sequence>MKRIAFVFSTVPHGTAAGREGLDALLATSALTDDLAVFFIADGVFQLLPGQKPDAVLARDYIATFKLLGLYDIEQCWVCAASLRERGLDPQTPFVVEATPLEADALRRELANYDVILRF</sequence>
<comment type="function">
    <text evidence="1">Part of a sulfur-relay system required for 2-thiolation of 5-methylaminomethyl-2-thiouridine (mnm(5)s(2)U) at tRNA wobble positions.</text>
</comment>
<comment type="subunit">
    <text evidence="1">Heterohexamer, formed by a dimer of trimers. The hexameric TusBCD complex contains 2 copies each of TusB, TusC and TusD. The TusBCD complex interacts with TusE.</text>
</comment>
<comment type="subcellular location">
    <subcellularLocation>
        <location evidence="1">Cytoplasm</location>
    </subcellularLocation>
</comment>
<comment type="similarity">
    <text evidence="1">Belongs to the DsrF/TusC family.</text>
</comment>
<accession>Q1R5T9</accession>
<feature type="chain" id="PRO_1000013242" description="Protein TusC">
    <location>
        <begin position="1"/>
        <end position="119"/>
    </location>
</feature>
<name>TUSC_ECOUT</name>
<keyword id="KW-0963">Cytoplasm</keyword>
<keyword id="KW-0819">tRNA processing</keyword>
<gene>
    <name evidence="1" type="primary">tusC</name>
    <name type="ordered locus">UTI89_C3846</name>
</gene>
<proteinExistence type="inferred from homology"/>
<reference key="1">
    <citation type="journal article" date="2006" name="Proc. Natl. Acad. Sci. U.S.A.">
        <title>Identification of genes subject to positive selection in uropathogenic strains of Escherichia coli: a comparative genomics approach.</title>
        <authorList>
            <person name="Chen S.L."/>
            <person name="Hung C.-S."/>
            <person name="Xu J."/>
            <person name="Reigstad C.S."/>
            <person name="Magrini V."/>
            <person name="Sabo A."/>
            <person name="Blasiar D."/>
            <person name="Bieri T."/>
            <person name="Meyer R.R."/>
            <person name="Ozersky P."/>
            <person name="Armstrong J.R."/>
            <person name="Fulton R.S."/>
            <person name="Latreille J.P."/>
            <person name="Spieth J."/>
            <person name="Hooton T.M."/>
            <person name="Mardis E.R."/>
            <person name="Hultgren S.J."/>
            <person name="Gordon J.I."/>
        </authorList>
    </citation>
    <scope>NUCLEOTIDE SEQUENCE [LARGE SCALE GENOMIC DNA]</scope>
    <source>
        <strain>UTI89 / UPEC</strain>
    </source>
</reference>
<dbReference type="EMBL" id="CP000243">
    <property type="protein sequence ID" value="ABE09275.1"/>
    <property type="molecule type" value="Genomic_DNA"/>
</dbReference>
<dbReference type="RefSeq" id="WP_000820734.1">
    <property type="nucleotide sequence ID" value="NZ_CP064825.1"/>
</dbReference>
<dbReference type="SMR" id="Q1R5T9"/>
<dbReference type="KEGG" id="eci:UTI89_C3846"/>
<dbReference type="HOGENOM" id="CLU_155943_1_0_6"/>
<dbReference type="Proteomes" id="UP000001952">
    <property type="component" value="Chromosome"/>
</dbReference>
<dbReference type="GO" id="GO:0005737">
    <property type="term" value="C:cytoplasm"/>
    <property type="evidence" value="ECO:0007669"/>
    <property type="project" value="UniProtKB-SubCell"/>
</dbReference>
<dbReference type="GO" id="GO:0008033">
    <property type="term" value="P:tRNA processing"/>
    <property type="evidence" value="ECO:0007669"/>
    <property type="project" value="UniProtKB-UniRule"/>
</dbReference>
<dbReference type="FunFam" id="3.40.1260.10:FF:000004">
    <property type="entry name" value="Sulfurtransferase TusC"/>
    <property type="match status" value="1"/>
</dbReference>
<dbReference type="Gene3D" id="3.40.1260.10">
    <property type="entry name" value="DsrEFH-like"/>
    <property type="match status" value="1"/>
</dbReference>
<dbReference type="HAMAP" id="MF_00389">
    <property type="entry name" value="Thiourid_synth_C"/>
    <property type="match status" value="1"/>
</dbReference>
<dbReference type="InterPro" id="IPR027396">
    <property type="entry name" value="DsrEFH-like"/>
</dbReference>
<dbReference type="InterPro" id="IPR003787">
    <property type="entry name" value="Sulphur_relay_DsrE/F-like"/>
</dbReference>
<dbReference type="InterPro" id="IPR037450">
    <property type="entry name" value="Sulphur_relay_TusC"/>
</dbReference>
<dbReference type="InterPro" id="IPR017462">
    <property type="entry name" value="Sulphur_relay_TusC/DsrF"/>
</dbReference>
<dbReference type="NCBIfam" id="NF001238">
    <property type="entry name" value="PRK00211.1"/>
    <property type="match status" value="1"/>
</dbReference>
<dbReference type="NCBIfam" id="TIGR03010">
    <property type="entry name" value="sulf_tusC_dsrF"/>
    <property type="match status" value="1"/>
</dbReference>
<dbReference type="PANTHER" id="PTHR38780">
    <property type="entry name" value="PROTEIN TUSC"/>
    <property type="match status" value="1"/>
</dbReference>
<dbReference type="PANTHER" id="PTHR38780:SF1">
    <property type="entry name" value="PROTEIN TUSC"/>
    <property type="match status" value="1"/>
</dbReference>
<dbReference type="Pfam" id="PF02635">
    <property type="entry name" value="DsrE"/>
    <property type="match status" value="1"/>
</dbReference>
<dbReference type="SUPFAM" id="SSF75169">
    <property type="entry name" value="DsrEFH-like"/>
    <property type="match status" value="1"/>
</dbReference>
<protein>
    <recommendedName>
        <fullName evidence="1">Protein TusC</fullName>
    </recommendedName>
    <alternativeName>
        <fullName evidence="1">tRNA 2-thiouridine synthesizing protein C</fullName>
    </alternativeName>
</protein>
<organism>
    <name type="scientific">Escherichia coli (strain UTI89 / UPEC)</name>
    <dbReference type="NCBI Taxonomy" id="364106"/>
    <lineage>
        <taxon>Bacteria</taxon>
        <taxon>Pseudomonadati</taxon>
        <taxon>Pseudomonadota</taxon>
        <taxon>Gammaproteobacteria</taxon>
        <taxon>Enterobacterales</taxon>
        <taxon>Enterobacteriaceae</taxon>
        <taxon>Escherichia</taxon>
    </lineage>
</organism>